<organism>
    <name type="scientific">Clostridium botulinum (strain Hall / ATCC 3502 / NCTC 13319 / Type A)</name>
    <dbReference type="NCBI Taxonomy" id="441771"/>
    <lineage>
        <taxon>Bacteria</taxon>
        <taxon>Bacillati</taxon>
        <taxon>Bacillota</taxon>
        <taxon>Clostridia</taxon>
        <taxon>Eubacteriales</taxon>
        <taxon>Clostridiaceae</taxon>
        <taxon>Clostridium</taxon>
    </lineage>
</organism>
<comment type="function">
    <text evidence="2">With S4 and S5 plays an important role in translational accuracy.</text>
</comment>
<comment type="function">
    <text evidence="2">Interacts with and stabilizes bases of the 16S rRNA that are involved in tRNA selection in the A site and with the mRNA backbone. Located at the interface of the 30S and 50S subunits, it traverses the body of the 30S subunit contacting proteins on the other side and probably holding the rRNA structure together. The combined cluster of proteins S8, S12 and S17 appears to hold together the shoulder and platform of the 30S subunit.</text>
</comment>
<comment type="subunit">
    <text evidence="2">Part of the 30S ribosomal subunit. Contacts proteins S8 and S17. May interact with IF1 in the 30S initiation complex.</text>
</comment>
<comment type="similarity">
    <text evidence="2">Belongs to the universal ribosomal protein uS12 family.</text>
</comment>
<reference key="1">
    <citation type="journal article" date="2007" name="Genome Res.">
        <title>Genome sequence of a proteolytic (Group I) Clostridium botulinum strain Hall A and comparative analysis of the clostridial genomes.</title>
        <authorList>
            <person name="Sebaihia M."/>
            <person name="Peck M.W."/>
            <person name="Minton N.P."/>
            <person name="Thomson N.R."/>
            <person name="Holden M.T.G."/>
            <person name="Mitchell W.J."/>
            <person name="Carter A.T."/>
            <person name="Bentley S.D."/>
            <person name="Mason D.R."/>
            <person name="Crossman L."/>
            <person name="Paul C.J."/>
            <person name="Ivens A."/>
            <person name="Wells-Bennik M.H.J."/>
            <person name="Davis I.J."/>
            <person name="Cerdeno-Tarraga A.M."/>
            <person name="Churcher C."/>
            <person name="Quail M.A."/>
            <person name="Chillingworth T."/>
            <person name="Feltwell T."/>
            <person name="Fraser A."/>
            <person name="Goodhead I."/>
            <person name="Hance Z."/>
            <person name="Jagels K."/>
            <person name="Larke N."/>
            <person name="Maddison M."/>
            <person name="Moule S."/>
            <person name="Mungall K."/>
            <person name="Norbertczak H."/>
            <person name="Rabbinowitsch E."/>
            <person name="Sanders M."/>
            <person name="Simmonds M."/>
            <person name="White B."/>
            <person name="Whithead S."/>
            <person name="Parkhill J."/>
        </authorList>
    </citation>
    <scope>NUCLEOTIDE SEQUENCE [LARGE SCALE GENOMIC DNA]</scope>
    <source>
        <strain>Hall / ATCC 3502 / NCTC 13319 / Type A</strain>
    </source>
</reference>
<reference key="2">
    <citation type="journal article" date="2007" name="PLoS ONE">
        <title>Analysis of the neurotoxin complex genes in Clostridium botulinum A1-A4 and B1 strains: BoNT/A3, /Ba4 and /B1 clusters are located within plasmids.</title>
        <authorList>
            <person name="Smith T.J."/>
            <person name="Hill K.K."/>
            <person name="Foley B.T."/>
            <person name="Detter J.C."/>
            <person name="Munk A.C."/>
            <person name="Bruce D.C."/>
            <person name="Doggett N.A."/>
            <person name="Smith L.A."/>
            <person name="Marks J.D."/>
            <person name="Xie G."/>
            <person name="Brettin T.S."/>
        </authorList>
    </citation>
    <scope>NUCLEOTIDE SEQUENCE [LARGE SCALE GENOMIC DNA]</scope>
    <source>
        <strain>Hall / ATCC 3502 / NCTC 13319 / Type A</strain>
    </source>
</reference>
<protein>
    <recommendedName>
        <fullName evidence="2">Small ribosomal subunit protein uS12</fullName>
    </recommendedName>
    <alternativeName>
        <fullName evidence="3">30S ribosomal protein S12</fullName>
    </alternativeName>
</protein>
<gene>
    <name evidence="2" type="primary">rpsL</name>
    <name type="ordered locus">CBO3485</name>
    <name type="ordered locus">CLC_3430</name>
</gene>
<name>RS12_CLOBH</name>
<evidence type="ECO:0000250" key="1"/>
<evidence type="ECO:0000255" key="2">
    <source>
        <dbReference type="HAMAP-Rule" id="MF_00403"/>
    </source>
</evidence>
<evidence type="ECO:0000305" key="3"/>
<accession>A5I7L1</accession>
<accession>A7G8U3</accession>
<keyword id="KW-0488">Methylation</keyword>
<keyword id="KW-1185">Reference proteome</keyword>
<keyword id="KW-0687">Ribonucleoprotein</keyword>
<keyword id="KW-0689">Ribosomal protein</keyword>
<keyword id="KW-0694">RNA-binding</keyword>
<keyword id="KW-0699">rRNA-binding</keyword>
<keyword id="KW-0820">tRNA-binding</keyword>
<proteinExistence type="inferred from homology"/>
<sequence>MPTISQLVRKGRKTIASASDSPALKECPQKRGVCTVVKTTTPKKPNSALRKVARIRLTNGYEVTAYIPGVGHNLQEHSVVLIRGGRVKDLPGVRYHIVRGALDAAGVANRMQSRSKYGAKKPKQK</sequence>
<feature type="chain" id="PRO_1000049782" description="Small ribosomal subunit protein uS12">
    <location>
        <begin position="1"/>
        <end position="125"/>
    </location>
</feature>
<feature type="modified residue" description="3-methylthioaspartic acid" evidence="1">
    <location>
        <position position="89"/>
    </location>
</feature>
<dbReference type="EMBL" id="CP000727">
    <property type="protein sequence ID" value="ABS37011.1"/>
    <property type="molecule type" value="Genomic_DNA"/>
</dbReference>
<dbReference type="EMBL" id="AM412317">
    <property type="protein sequence ID" value="CAL85046.1"/>
    <property type="molecule type" value="Genomic_DNA"/>
</dbReference>
<dbReference type="RefSeq" id="WP_003357676.1">
    <property type="nucleotide sequence ID" value="NC_009698.1"/>
</dbReference>
<dbReference type="RefSeq" id="YP_001255967.1">
    <property type="nucleotide sequence ID" value="NC_009495.1"/>
</dbReference>
<dbReference type="RefSeq" id="YP_001389208.1">
    <property type="nucleotide sequence ID" value="NC_009698.1"/>
</dbReference>
<dbReference type="SMR" id="A5I7L1"/>
<dbReference type="GeneID" id="92940255"/>
<dbReference type="KEGG" id="cbh:CLC_3430"/>
<dbReference type="KEGG" id="cbo:CBO3485"/>
<dbReference type="PATRIC" id="fig|413999.7.peg.3462"/>
<dbReference type="HOGENOM" id="CLU_104295_1_2_9"/>
<dbReference type="PRO" id="PR:A5I7L1"/>
<dbReference type="Proteomes" id="UP000001986">
    <property type="component" value="Chromosome"/>
</dbReference>
<dbReference type="GO" id="GO:0005840">
    <property type="term" value="C:ribosome"/>
    <property type="evidence" value="ECO:0000318"/>
    <property type="project" value="GO_Central"/>
</dbReference>
<dbReference type="GO" id="GO:0015935">
    <property type="term" value="C:small ribosomal subunit"/>
    <property type="evidence" value="ECO:0007669"/>
    <property type="project" value="InterPro"/>
</dbReference>
<dbReference type="GO" id="GO:0019843">
    <property type="term" value="F:rRNA binding"/>
    <property type="evidence" value="ECO:0007669"/>
    <property type="project" value="UniProtKB-UniRule"/>
</dbReference>
<dbReference type="GO" id="GO:0003735">
    <property type="term" value="F:structural constituent of ribosome"/>
    <property type="evidence" value="ECO:0000318"/>
    <property type="project" value="GO_Central"/>
</dbReference>
<dbReference type="GO" id="GO:0000049">
    <property type="term" value="F:tRNA binding"/>
    <property type="evidence" value="ECO:0007669"/>
    <property type="project" value="UniProtKB-UniRule"/>
</dbReference>
<dbReference type="GO" id="GO:0006412">
    <property type="term" value="P:translation"/>
    <property type="evidence" value="ECO:0000318"/>
    <property type="project" value="GO_Central"/>
</dbReference>
<dbReference type="CDD" id="cd03368">
    <property type="entry name" value="Ribosomal_S12"/>
    <property type="match status" value="1"/>
</dbReference>
<dbReference type="FunFam" id="2.40.50.140:FF:000001">
    <property type="entry name" value="30S ribosomal protein S12"/>
    <property type="match status" value="1"/>
</dbReference>
<dbReference type="Gene3D" id="2.40.50.140">
    <property type="entry name" value="Nucleic acid-binding proteins"/>
    <property type="match status" value="1"/>
</dbReference>
<dbReference type="HAMAP" id="MF_00403_B">
    <property type="entry name" value="Ribosomal_uS12_B"/>
    <property type="match status" value="1"/>
</dbReference>
<dbReference type="InterPro" id="IPR012340">
    <property type="entry name" value="NA-bd_OB-fold"/>
</dbReference>
<dbReference type="InterPro" id="IPR006032">
    <property type="entry name" value="Ribosomal_uS12"/>
</dbReference>
<dbReference type="InterPro" id="IPR005679">
    <property type="entry name" value="Ribosomal_uS12_bac"/>
</dbReference>
<dbReference type="NCBIfam" id="TIGR00981">
    <property type="entry name" value="rpsL_bact"/>
    <property type="match status" value="1"/>
</dbReference>
<dbReference type="PANTHER" id="PTHR11652">
    <property type="entry name" value="30S RIBOSOMAL PROTEIN S12 FAMILY MEMBER"/>
    <property type="match status" value="1"/>
</dbReference>
<dbReference type="Pfam" id="PF00164">
    <property type="entry name" value="Ribosom_S12_S23"/>
    <property type="match status" value="1"/>
</dbReference>
<dbReference type="PIRSF" id="PIRSF002133">
    <property type="entry name" value="Ribosomal_S12/S23"/>
    <property type="match status" value="1"/>
</dbReference>
<dbReference type="PRINTS" id="PR01034">
    <property type="entry name" value="RIBOSOMALS12"/>
</dbReference>
<dbReference type="SUPFAM" id="SSF50249">
    <property type="entry name" value="Nucleic acid-binding proteins"/>
    <property type="match status" value="1"/>
</dbReference>
<dbReference type="PROSITE" id="PS00055">
    <property type="entry name" value="RIBOSOMAL_S12"/>
    <property type="match status" value="1"/>
</dbReference>